<accession>Q6NT04</accession>
<accession>Q9BXZ0</accession>
<sequence length="549" mass="63236">MNKRGKYTTLNLEEKMKVLSRIEAGRSLKSVMDEFGISKSTFYDIKKNKKLILDFVLKQDMPLVGAEKRKRTTGAKYGDVDDAVYMWYQQKRSAGVPVRGVELQAAAERFARCFGRTDFKASTGWLFRFRNRHAIGNRKGCGEQVLSSVSENVEPFRQKLSMIIKEEKLCLAQLYSGDETDLFWKSMPENSQASRKDICLPGKKINKERLSAFLCANADGTHKLKSIIIGKSKLPKSVKEDTSTLPVIYKPSKDVWFTRELFSEWFFQNFVPEVRHFQLNVLRFHDEDVRALLLLDSCPAHPSSESLTSEDGRIKCMFFPHNTSTLIQPMNQGVILSCKRLYRWKQLEESLVIFEESDDEQEKGDKGVSKIKIYNIKSAIFNWAKSWEEVKQITIANAWENLLYKKEPEYDFQGLEHGDYREILEKCGELETKLDDDRVWLNGDEEKGCLLKTKGGITKEVVQKGGEAEKQTAEFKLSAVRESLDYLLDFVDATPEFQRFHFTLKEMQQEIVKKQFQSKIHSRIGSFLKPRPHNIKDSFSGPSTSGSNH</sequence>
<comment type="interaction">
    <interactant intactId="EBI-3916512">
        <id>Q6NT04</id>
    </interactant>
    <interactant intactId="EBI-743796">
        <id>Q8TBN0</id>
        <label>RAB3IL1</label>
    </interactant>
    <organismsDiffer>false</organismsDiffer>
    <experiments>3</experiments>
</comment>
<comment type="subcellular location">
    <subcellularLocation>
        <location evidence="8">Nucleus</location>
    </subcellularLocation>
</comment>
<comment type="alternative products">
    <event type="alternative splicing"/>
    <isoform>
        <id>Q6NT04-1</id>
        <name>1</name>
        <sequence type="displayed"/>
    </isoform>
    <isoform>
        <id>Q6NT04-2</id>
        <name>2</name>
        <sequence type="described" ref="VSP_022453"/>
    </isoform>
</comment>
<comment type="tissue specificity">
    <text evidence="6">Expressed in all tissues tested. Higher expression in testis and ovary.</text>
</comment>
<comment type="similarity">
    <text evidence="8">Belongs to the tigger transposable element derived protein family.</text>
</comment>
<gene>
    <name type="primary">TIGD7</name>
</gene>
<proteinExistence type="evidence at protein level"/>
<organism>
    <name type="scientific">Homo sapiens</name>
    <name type="common">Human</name>
    <dbReference type="NCBI Taxonomy" id="9606"/>
    <lineage>
        <taxon>Eukaryota</taxon>
        <taxon>Metazoa</taxon>
        <taxon>Chordata</taxon>
        <taxon>Craniata</taxon>
        <taxon>Vertebrata</taxon>
        <taxon>Euteleostomi</taxon>
        <taxon>Mammalia</taxon>
        <taxon>Eutheria</taxon>
        <taxon>Euarchontoglires</taxon>
        <taxon>Primates</taxon>
        <taxon>Haplorrhini</taxon>
        <taxon>Catarrhini</taxon>
        <taxon>Hominidae</taxon>
        <taxon>Homo</taxon>
    </lineage>
</organism>
<evidence type="ECO:0000250" key="1"/>
<evidence type="ECO:0000255" key="2"/>
<evidence type="ECO:0000255" key="3">
    <source>
        <dbReference type="PROSITE-ProRule" id="PRU00320"/>
    </source>
</evidence>
<evidence type="ECO:0000255" key="4">
    <source>
        <dbReference type="PROSITE-ProRule" id="PRU00583"/>
    </source>
</evidence>
<evidence type="ECO:0000256" key="5">
    <source>
        <dbReference type="SAM" id="MobiDB-lite"/>
    </source>
</evidence>
<evidence type="ECO:0000269" key="6">
    <source>
    </source>
</evidence>
<evidence type="ECO:0000303" key="7">
    <source>
    </source>
</evidence>
<evidence type="ECO:0000305" key="8"/>
<reference key="1">
    <citation type="journal article" date="2004" name="Biochem. Genet.">
        <title>Isolation and characterization of a Jerky and JRK/JH8 like gene, tigger transposable element derived 7, TIGD7.</title>
        <authorList>
            <person name="Dou T."/>
            <person name="Gu S."/>
            <person name="Zhou Z."/>
            <person name="Ji C."/>
            <person name="Zeng L."/>
            <person name="Ye X."/>
            <person name="Xu J."/>
            <person name="Ying K."/>
            <person name="Xie Y."/>
            <person name="Mao Y."/>
        </authorList>
    </citation>
    <scope>NUCLEOTIDE SEQUENCE [MRNA] (ISOFORM 2)</scope>
    <scope>TISSUE SPECIFICITY</scope>
    <source>
        <tissue>Fetal brain</tissue>
    </source>
</reference>
<reference key="2">
    <citation type="journal article" date="2004" name="Genome Res.">
        <title>The status, quality, and expansion of the NIH full-length cDNA project: the Mammalian Gene Collection (MGC).</title>
        <authorList>
            <consortium name="The MGC Project Team"/>
        </authorList>
    </citation>
    <scope>NUCLEOTIDE SEQUENCE [LARGE SCALE MRNA] (ISOFORM 1)</scope>
</reference>
<dbReference type="EMBL" id="AF251050">
    <property type="protein sequence ID" value="AAK34940.1"/>
    <property type="molecule type" value="mRNA"/>
</dbReference>
<dbReference type="EMBL" id="BC069632">
    <property type="protein sequence ID" value="AAH69632.1"/>
    <property type="molecule type" value="mRNA"/>
</dbReference>
<dbReference type="EMBL" id="BC069623">
    <property type="protein sequence ID" value="AAH69623.1"/>
    <property type="molecule type" value="mRNA"/>
</dbReference>
<dbReference type="CCDS" id="CCDS10500.1">
    <molecule id="Q6NT04-1"/>
</dbReference>
<dbReference type="RefSeq" id="NP_149985.2">
    <molecule id="Q6NT04-1"/>
    <property type="nucleotide sequence ID" value="NM_033208.3"/>
</dbReference>
<dbReference type="SMR" id="Q6NT04"/>
<dbReference type="BioGRID" id="124801">
    <property type="interactions" value="9"/>
</dbReference>
<dbReference type="FunCoup" id="Q6NT04">
    <property type="interactions" value="441"/>
</dbReference>
<dbReference type="IntAct" id="Q6NT04">
    <property type="interactions" value="7"/>
</dbReference>
<dbReference type="STRING" id="9606.ENSP00000380071"/>
<dbReference type="iPTMnet" id="Q6NT04"/>
<dbReference type="PhosphoSitePlus" id="Q6NT04"/>
<dbReference type="BioMuta" id="TIGD7"/>
<dbReference type="DMDM" id="74762337"/>
<dbReference type="MassIVE" id="Q6NT04"/>
<dbReference type="PaxDb" id="9606-ENSP00000380071"/>
<dbReference type="PeptideAtlas" id="Q6NT04"/>
<dbReference type="ProteomicsDB" id="66649">
    <molecule id="Q6NT04-1"/>
</dbReference>
<dbReference type="ProteomicsDB" id="66650">
    <molecule id="Q6NT04-2"/>
</dbReference>
<dbReference type="Antibodypedia" id="49972">
    <property type="antibodies" value="46 antibodies from 14 providers"/>
</dbReference>
<dbReference type="DNASU" id="91151"/>
<dbReference type="Ensembl" id="ENST00000396862.2">
    <molecule id="Q6NT04-1"/>
    <property type="protein sequence ID" value="ENSP00000380071.1"/>
    <property type="gene ID" value="ENSG00000140993.11"/>
</dbReference>
<dbReference type="GeneID" id="91151"/>
<dbReference type="KEGG" id="hsa:91151"/>
<dbReference type="MANE-Select" id="ENST00000396862.2">
    <property type="protein sequence ID" value="ENSP00000380071.1"/>
    <property type="RefSeq nucleotide sequence ID" value="NM_033208.4"/>
    <property type="RefSeq protein sequence ID" value="NP_149985.2"/>
</dbReference>
<dbReference type="UCSC" id="uc002cus.4">
    <molecule id="Q6NT04-1"/>
    <property type="organism name" value="human"/>
</dbReference>
<dbReference type="AGR" id="HGNC:18331"/>
<dbReference type="CTD" id="91151"/>
<dbReference type="GeneCards" id="TIGD7"/>
<dbReference type="HGNC" id="HGNC:18331">
    <property type="gene designation" value="TIGD7"/>
</dbReference>
<dbReference type="HPA" id="ENSG00000140993">
    <property type="expression patterns" value="Low tissue specificity"/>
</dbReference>
<dbReference type="MIM" id="612969">
    <property type="type" value="gene"/>
</dbReference>
<dbReference type="neXtProt" id="NX_Q6NT04"/>
<dbReference type="OpenTargets" id="ENSG00000140993"/>
<dbReference type="PharmGKB" id="PA38524"/>
<dbReference type="VEuPathDB" id="HostDB:ENSG00000140993"/>
<dbReference type="eggNOG" id="KOG3105">
    <property type="taxonomic scope" value="Eukaryota"/>
</dbReference>
<dbReference type="GeneTree" id="ENSGT00940000163295"/>
<dbReference type="HOGENOM" id="CLU_018294_1_1_1"/>
<dbReference type="InParanoid" id="Q6NT04"/>
<dbReference type="OMA" id="WFTRESF"/>
<dbReference type="OrthoDB" id="125347at2759"/>
<dbReference type="PAN-GO" id="Q6NT04">
    <property type="GO annotations" value="2 GO annotations based on evolutionary models"/>
</dbReference>
<dbReference type="PhylomeDB" id="Q6NT04"/>
<dbReference type="TreeFam" id="TF101131"/>
<dbReference type="PathwayCommons" id="Q6NT04"/>
<dbReference type="SignaLink" id="Q6NT04"/>
<dbReference type="BioGRID-ORCS" id="91151">
    <property type="hits" value="14 hits in 1159 CRISPR screens"/>
</dbReference>
<dbReference type="ChiTaRS" id="TIGD7">
    <property type="organism name" value="human"/>
</dbReference>
<dbReference type="GenomeRNAi" id="91151"/>
<dbReference type="Pharos" id="Q6NT04">
    <property type="development level" value="Tdark"/>
</dbReference>
<dbReference type="PRO" id="PR:Q6NT04"/>
<dbReference type="Proteomes" id="UP000005640">
    <property type="component" value="Chromosome 16"/>
</dbReference>
<dbReference type="RNAct" id="Q6NT04">
    <property type="molecule type" value="protein"/>
</dbReference>
<dbReference type="Bgee" id="ENSG00000140993">
    <property type="expression patterns" value="Expressed in tendon of biceps brachii and 154 other cell types or tissues"/>
</dbReference>
<dbReference type="ExpressionAtlas" id="Q6NT04">
    <property type="expression patterns" value="baseline and differential"/>
</dbReference>
<dbReference type="GO" id="GO:0005634">
    <property type="term" value="C:nucleus"/>
    <property type="evidence" value="ECO:0000318"/>
    <property type="project" value="GO_Central"/>
</dbReference>
<dbReference type="GO" id="GO:0003677">
    <property type="term" value="F:DNA binding"/>
    <property type="evidence" value="ECO:0000318"/>
    <property type="project" value="GO_Central"/>
</dbReference>
<dbReference type="Gene3D" id="1.10.10.60">
    <property type="entry name" value="Homeodomain-like"/>
    <property type="match status" value="2"/>
</dbReference>
<dbReference type="InterPro" id="IPR050863">
    <property type="entry name" value="CenT-Element_Derived"/>
</dbReference>
<dbReference type="InterPro" id="IPR004875">
    <property type="entry name" value="DDE_SF_endonuclease_dom"/>
</dbReference>
<dbReference type="InterPro" id="IPR009057">
    <property type="entry name" value="Homeodomain-like_sf"/>
</dbReference>
<dbReference type="InterPro" id="IPR006600">
    <property type="entry name" value="HTH_CenpB_DNA-bd_dom"/>
</dbReference>
<dbReference type="InterPro" id="IPR007889">
    <property type="entry name" value="HTH_Psq"/>
</dbReference>
<dbReference type="PANTHER" id="PTHR19303:SF17">
    <property type="entry name" value="TIGGER TRANSPOSABLE ELEMENT-DERIVED PROTEIN 7"/>
    <property type="match status" value="1"/>
</dbReference>
<dbReference type="PANTHER" id="PTHR19303">
    <property type="entry name" value="TRANSPOSON"/>
    <property type="match status" value="1"/>
</dbReference>
<dbReference type="Pfam" id="PF04218">
    <property type="entry name" value="CENP-B_N"/>
    <property type="match status" value="1"/>
</dbReference>
<dbReference type="Pfam" id="PF03184">
    <property type="entry name" value="DDE_1"/>
    <property type="match status" value="1"/>
</dbReference>
<dbReference type="Pfam" id="PF03221">
    <property type="entry name" value="HTH_Tnp_Tc5"/>
    <property type="match status" value="1"/>
</dbReference>
<dbReference type="SMART" id="SM00674">
    <property type="entry name" value="CENPB"/>
    <property type="match status" value="1"/>
</dbReference>
<dbReference type="SUPFAM" id="SSF46689">
    <property type="entry name" value="Homeodomain-like"/>
    <property type="match status" value="2"/>
</dbReference>
<dbReference type="PROSITE" id="PS51253">
    <property type="entry name" value="HTH_CENPB"/>
    <property type="match status" value="1"/>
</dbReference>
<dbReference type="PROSITE" id="PS50960">
    <property type="entry name" value="HTH_PSQ"/>
    <property type="match status" value="1"/>
</dbReference>
<name>TIGD7_HUMAN</name>
<feature type="chain" id="PRO_0000272620" description="Tigger transposable element-derived protein 7">
    <location>
        <begin position="1"/>
        <end position="549"/>
    </location>
</feature>
<feature type="domain" description="HTH psq-type" evidence="3">
    <location>
        <begin position="1"/>
        <end position="52"/>
    </location>
</feature>
<feature type="domain" description="HTH CENPB-type" evidence="4">
    <location>
        <begin position="68"/>
        <end position="139"/>
    </location>
</feature>
<feature type="domain" description="DDE-1" evidence="2">
    <location>
        <begin position="169"/>
        <end position="399"/>
    </location>
</feature>
<feature type="DNA-binding region" description="H-T-H motif" evidence="1">
    <location>
        <begin position="28"/>
        <end position="48"/>
    </location>
</feature>
<feature type="DNA-binding region" description="H-T-H motif" evidence="1">
    <location>
        <begin position="101"/>
        <end position="132"/>
    </location>
</feature>
<feature type="region of interest" description="Disordered" evidence="5">
    <location>
        <begin position="527"/>
        <end position="549"/>
    </location>
</feature>
<feature type="compositionally biased region" description="Polar residues" evidence="5">
    <location>
        <begin position="540"/>
        <end position="549"/>
    </location>
</feature>
<feature type="splice variant" id="VSP_022453" description="In isoform 2." evidence="7">
    <original>KEMQQEIVKKQFQSKIHSRIGSFLKPRPHNIKDSFSGPSTSGSNH</original>
    <variation>CEFSDDS</variation>
    <location>
        <begin position="505"/>
        <end position="549"/>
    </location>
</feature>
<feature type="sequence conflict" description="In Ref. 1; AAK34940." evidence="8" ref="1">
    <original>K</original>
    <variation>T</variation>
    <location>
        <position position="207"/>
    </location>
</feature>
<feature type="sequence conflict" description="In Ref. 1; AAK34940." evidence="8" ref="1">
    <original>T</original>
    <variation>S</variation>
    <location>
        <position position="323"/>
    </location>
</feature>
<keyword id="KW-0025">Alternative splicing</keyword>
<keyword id="KW-0238">DNA-binding</keyword>
<keyword id="KW-0539">Nucleus</keyword>
<keyword id="KW-1267">Proteomics identification</keyword>
<keyword id="KW-1185">Reference proteome</keyword>
<protein>
    <recommendedName>
        <fullName>Tigger transposable element-derived protein 7</fullName>
    </recommendedName>
</protein>